<reference key="1">
    <citation type="journal article" date="2005" name="Nature">
        <title>Sequencing of Aspergillus nidulans and comparative analysis with A. fumigatus and A. oryzae.</title>
        <authorList>
            <person name="Galagan J.E."/>
            <person name="Calvo S.E."/>
            <person name="Cuomo C."/>
            <person name="Ma L.-J."/>
            <person name="Wortman J.R."/>
            <person name="Batzoglou S."/>
            <person name="Lee S.-I."/>
            <person name="Bastuerkmen M."/>
            <person name="Spevak C.C."/>
            <person name="Clutterbuck J."/>
            <person name="Kapitonov V."/>
            <person name="Jurka J."/>
            <person name="Scazzocchio C."/>
            <person name="Farman M.L."/>
            <person name="Butler J."/>
            <person name="Purcell S."/>
            <person name="Harris S."/>
            <person name="Braus G.H."/>
            <person name="Draht O."/>
            <person name="Busch S."/>
            <person name="D'Enfert C."/>
            <person name="Bouchier C."/>
            <person name="Goldman G.H."/>
            <person name="Bell-Pedersen D."/>
            <person name="Griffiths-Jones S."/>
            <person name="Doonan J.H."/>
            <person name="Yu J."/>
            <person name="Vienken K."/>
            <person name="Pain A."/>
            <person name="Freitag M."/>
            <person name="Selker E.U."/>
            <person name="Archer D.B."/>
            <person name="Penalva M.A."/>
            <person name="Oakley B.R."/>
            <person name="Momany M."/>
            <person name="Tanaka T."/>
            <person name="Kumagai T."/>
            <person name="Asai K."/>
            <person name="Machida M."/>
            <person name="Nierman W.C."/>
            <person name="Denning D.W."/>
            <person name="Caddick M.X."/>
            <person name="Hynes M."/>
            <person name="Paoletti M."/>
            <person name="Fischer R."/>
            <person name="Miller B.L."/>
            <person name="Dyer P.S."/>
            <person name="Sachs M.S."/>
            <person name="Osmani S.A."/>
            <person name="Birren B.W."/>
        </authorList>
    </citation>
    <scope>NUCLEOTIDE SEQUENCE [LARGE SCALE GENOMIC DNA]</scope>
    <source>
        <strain>FGSC A4 / ATCC 38163 / CBS 112.46 / NRRL 194 / M139</strain>
    </source>
</reference>
<reference key="2">
    <citation type="journal article" date="2009" name="Fungal Genet. Biol.">
        <title>The 2008 update of the Aspergillus nidulans genome annotation: a community effort.</title>
        <authorList>
            <person name="Wortman J.R."/>
            <person name="Gilsenan J.M."/>
            <person name="Joardar V."/>
            <person name="Deegan J."/>
            <person name="Clutterbuck J."/>
            <person name="Andersen M.R."/>
            <person name="Archer D."/>
            <person name="Bencina M."/>
            <person name="Braus G."/>
            <person name="Coutinho P."/>
            <person name="von Dohren H."/>
            <person name="Doonan J."/>
            <person name="Driessen A.J."/>
            <person name="Durek P."/>
            <person name="Espeso E."/>
            <person name="Fekete E."/>
            <person name="Flipphi M."/>
            <person name="Estrada C.G."/>
            <person name="Geysens S."/>
            <person name="Goldman G."/>
            <person name="de Groot P.W."/>
            <person name="Hansen K."/>
            <person name="Harris S.D."/>
            <person name="Heinekamp T."/>
            <person name="Helmstaedt K."/>
            <person name="Henrissat B."/>
            <person name="Hofmann G."/>
            <person name="Homan T."/>
            <person name="Horio T."/>
            <person name="Horiuchi H."/>
            <person name="James S."/>
            <person name="Jones M."/>
            <person name="Karaffa L."/>
            <person name="Karanyi Z."/>
            <person name="Kato M."/>
            <person name="Keller N."/>
            <person name="Kelly D.E."/>
            <person name="Kiel J.A."/>
            <person name="Kim J.M."/>
            <person name="van der Klei I.J."/>
            <person name="Klis F.M."/>
            <person name="Kovalchuk A."/>
            <person name="Krasevec N."/>
            <person name="Kubicek C.P."/>
            <person name="Liu B."/>
            <person name="Maccabe A."/>
            <person name="Meyer V."/>
            <person name="Mirabito P."/>
            <person name="Miskei M."/>
            <person name="Mos M."/>
            <person name="Mullins J."/>
            <person name="Nelson D.R."/>
            <person name="Nielsen J."/>
            <person name="Oakley B.R."/>
            <person name="Osmani S.A."/>
            <person name="Pakula T."/>
            <person name="Paszewski A."/>
            <person name="Paulsen I."/>
            <person name="Pilsyk S."/>
            <person name="Pocsi I."/>
            <person name="Punt P.J."/>
            <person name="Ram A.F."/>
            <person name="Ren Q."/>
            <person name="Robellet X."/>
            <person name="Robson G."/>
            <person name="Seiboth B."/>
            <person name="van Solingen P."/>
            <person name="Specht T."/>
            <person name="Sun J."/>
            <person name="Taheri-Talesh N."/>
            <person name="Takeshita N."/>
            <person name="Ussery D."/>
            <person name="vanKuyk P.A."/>
            <person name="Visser H."/>
            <person name="van de Vondervoort P.J."/>
            <person name="de Vries R.P."/>
            <person name="Walton J."/>
            <person name="Xiang X."/>
            <person name="Xiong Y."/>
            <person name="Zeng A.P."/>
            <person name="Brandt B.W."/>
            <person name="Cornell M.J."/>
            <person name="van den Hondel C.A."/>
            <person name="Visser J."/>
            <person name="Oliver S.G."/>
            <person name="Turner G."/>
        </authorList>
    </citation>
    <scope>GENOME REANNOTATION</scope>
    <source>
        <strain>FGSC A4 / ATCC 38163 / CBS 112.46 / NRRL 194 / M139</strain>
    </source>
</reference>
<gene>
    <name type="primary">get1</name>
    <name type="ORF">AN4342</name>
</gene>
<proteinExistence type="inferred from homology"/>
<keyword id="KW-0175">Coiled coil</keyword>
<keyword id="KW-0256">Endoplasmic reticulum</keyword>
<keyword id="KW-0472">Membrane</keyword>
<keyword id="KW-1185">Reference proteome</keyword>
<keyword id="KW-0812">Transmembrane</keyword>
<keyword id="KW-1133">Transmembrane helix</keyword>
<keyword id="KW-0813">Transport</keyword>
<accession>Q5B538</accession>
<accession>C8V947</accession>
<organism>
    <name type="scientific">Emericella nidulans (strain FGSC A4 / ATCC 38163 / CBS 112.46 / NRRL 194 / M139)</name>
    <name type="common">Aspergillus nidulans</name>
    <dbReference type="NCBI Taxonomy" id="227321"/>
    <lineage>
        <taxon>Eukaryota</taxon>
        <taxon>Fungi</taxon>
        <taxon>Dikarya</taxon>
        <taxon>Ascomycota</taxon>
        <taxon>Pezizomycotina</taxon>
        <taxon>Eurotiomycetes</taxon>
        <taxon>Eurotiomycetidae</taxon>
        <taxon>Eurotiales</taxon>
        <taxon>Aspergillaceae</taxon>
        <taxon>Aspergillus</taxon>
        <taxon>Aspergillus subgen. Nidulantes</taxon>
    </lineage>
</organism>
<evidence type="ECO:0000255" key="1">
    <source>
        <dbReference type="HAMAP-Rule" id="MF_03113"/>
    </source>
</evidence>
<evidence type="ECO:0000305" key="2"/>
<feature type="chain" id="PRO_0000388594" description="Protein get1">
    <location>
        <begin position="1"/>
        <end position="197"/>
    </location>
</feature>
<feature type="topological domain" description="Lumenal" evidence="1">
    <location>
        <begin position="1"/>
        <end position="4"/>
    </location>
</feature>
<feature type="transmembrane region" description="Helical" evidence="1">
    <location>
        <begin position="5"/>
        <end position="24"/>
    </location>
</feature>
<feature type="topological domain" description="Cytoplasmic" evidence="1">
    <location>
        <begin position="25"/>
        <end position="110"/>
    </location>
</feature>
<feature type="transmembrane region" description="Helical" evidence="1">
    <location>
        <begin position="111"/>
        <end position="131"/>
    </location>
</feature>
<feature type="topological domain" description="Lumenal" evidence="1">
    <location>
        <begin position="132"/>
        <end position="155"/>
    </location>
</feature>
<feature type="transmembrane region" description="Helical" evidence="1">
    <location>
        <begin position="156"/>
        <end position="172"/>
    </location>
</feature>
<feature type="topological domain" description="Cytoplasmic" evidence="1">
    <location>
        <begin position="173"/>
        <end position="197"/>
    </location>
</feature>
<feature type="coiled-coil region" evidence="1">
    <location>
        <begin position="43"/>
        <end position="99"/>
    </location>
</feature>
<comment type="function">
    <text evidence="1">Required for the post-translational delivery of tail-anchored (TA) proteins to the endoplasmic reticulum. Acts as a membrane receptor for soluble get3, which recognizes and selectively binds the transmembrane domain of TA proteins in the cytosol.</text>
</comment>
<comment type="subunit">
    <text evidence="1">Interacts with get3.</text>
</comment>
<comment type="subcellular location">
    <subcellularLocation>
        <location evidence="1">Endoplasmic reticulum membrane</location>
        <topology evidence="1">Multi-pass membrane protein</topology>
    </subcellularLocation>
</comment>
<comment type="similarity">
    <text evidence="1">Belongs to the WRB/GET1 family.</text>
</comment>
<comment type="sequence caution" evidence="2">
    <conflict type="erroneous gene model prediction">
        <sequence resource="EMBL-CDS" id="CBF77722"/>
    </conflict>
</comment>
<comment type="sequence caution" evidence="2">
    <conflict type="erroneous gene model prediction">
        <sequence resource="EMBL-CDS" id="EAA60503"/>
    </conflict>
</comment>
<protein>
    <recommendedName>
        <fullName evidence="1">Protein get1</fullName>
    </recommendedName>
    <alternativeName>
        <fullName evidence="1">Guided entry of tail-anchored proteins 1</fullName>
    </alternativeName>
</protein>
<dbReference type="EMBL" id="AACD01000075">
    <property type="protein sequence ID" value="EAA60503.1"/>
    <property type="status" value="ALT_SEQ"/>
    <property type="molecule type" value="Genomic_DNA"/>
</dbReference>
<dbReference type="EMBL" id="BN001303">
    <property type="protein sequence ID" value="CBF77722.1"/>
    <property type="status" value="ALT_SEQ"/>
    <property type="molecule type" value="Genomic_DNA"/>
</dbReference>
<dbReference type="RefSeq" id="XP_661946.1">
    <property type="nucleotide sequence ID" value="XM_656854.1"/>
</dbReference>
<dbReference type="SMR" id="Q5B538"/>
<dbReference type="STRING" id="227321.Q5B538"/>
<dbReference type="KEGG" id="ani:ANIA_04342"/>
<dbReference type="VEuPathDB" id="FungiDB:AN4342"/>
<dbReference type="eggNOG" id="KOG4253">
    <property type="taxonomic scope" value="Eukaryota"/>
</dbReference>
<dbReference type="HOGENOM" id="CLU_089418_1_0_1"/>
<dbReference type="InParanoid" id="Q5B538"/>
<dbReference type="OrthoDB" id="69461at2759"/>
<dbReference type="Proteomes" id="UP000000560">
    <property type="component" value="Chromosome III"/>
</dbReference>
<dbReference type="GO" id="GO:0005789">
    <property type="term" value="C:endoplasmic reticulum membrane"/>
    <property type="evidence" value="ECO:0007669"/>
    <property type="project" value="UniProtKB-SubCell"/>
</dbReference>
<dbReference type="GO" id="GO:0043529">
    <property type="term" value="C:GET complex"/>
    <property type="evidence" value="ECO:0000318"/>
    <property type="project" value="GO_Central"/>
</dbReference>
<dbReference type="GO" id="GO:0043495">
    <property type="term" value="F:protein-membrane adaptor activity"/>
    <property type="evidence" value="ECO:0000318"/>
    <property type="project" value="GO_Central"/>
</dbReference>
<dbReference type="GO" id="GO:0071816">
    <property type="term" value="P:tail-anchored membrane protein insertion into ER membrane"/>
    <property type="evidence" value="ECO:0000318"/>
    <property type="project" value="GO_Central"/>
</dbReference>
<dbReference type="FunFam" id="1.10.287.660:FF:000006">
    <property type="entry name" value="Protein GET1"/>
    <property type="match status" value="1"/>
</dbReference>
<dbReference type="Gene3D" id="1.10.287.660">
    <property type="entry name" value="Helix hairpin bin"/>
    <property type="match status" value="1"/>
</dbReference>
<dbReference type="HAMAP" id="MF_03113">
    <property type="entry name" value="Get1"/>
    <property type="match status" value="1"/>
</dbReference>
<dbReference type="InterPro" id="IPR028945">
    <property type="entry name" value="Get1"/>
</dbReference>
<dbReference type="InterPro" id="IPR027538">
    <property type="entry name" value="Get1_fungi"/>
</dbReference>
<dbReference type="InterPro" id="IPR029012">
    <property type="entry name" value="Helix_hairpin_bin_sf"/>
</dbReference>
<dbReference type="PANTHER" id="PTHR42650:SF1">
    <property type="entry name" value="GUIDED ENTRY OF TAIL-ANCHORED PROTEINS FACTOR 1"/>
    <property type="match status" value="1"/>
</dbReference>
<dbReference type="PANTHER" id="PTHR42650">
    <property type="entry name" value="TAIL-ANCHORED PROTEIN INSERTION RECEPTOR WRB"/>
    <property type="match status" value="1"/>
</dbReference>
<dbReference type="Pfam" id="PF04420">
    <property type="entry name" value="CHD5"/>
    <property type="match status" value="1"/>
</dbReference>
<name>GET1_EMENI</name>
<sequence length="197" mass="22254">MISLIWTIFILHIAIFLVNTIGAATIDNLLWLLYLKLPTSLYQTAQEQTKLKREVVQLKRDMNNTSSQDEFAKWAKLRRRHDKALSEYEALNQKLSSQKGSFDWFVKIARWLSTTGLKIFIQFRYSKTPVFELPGGWLPYPVEWVLAFPRAPQGSVSVQVWNSVCATAVTVIAEIITGLALQVKGSAQAVPATAKKA</sequence>